<feature type="chain" id="PRO_0000304606" description="Mediator of RNA polymerase II transcription subunit 14">
    <location>
        <begin position="1"/>
        <end position="1274"/>
    </location>
</feature>
<feature type="region of interest" description="Disordered" evidence="2">
    <location>
        <begin position="1"/>
        <end position="40"/>
    </location>
</feature>
<feature type="region of interest" description="Disordered" evidence="2">
    <location>
        <begin position="1056"/>
        <end position="1142"/>
    </location>
</feature>
<feature type="region of interest" description="Disordered" evidence="2">
    <location>
        <begin position="1155"/>
        <end position="1274"/>
    </location>
</feature>
<feature type="compositionally biased region" description="Basic and acidic residues" evidence="2">
    <location>
        <begin position="27"/>
        <end position="37"/>
    </location>
</feature>
<feature type="compositionally biased region" description="Polar residues" evidence="2">
    <location>
        <begin position="1075"/>
        <end position="1085"/>
    </location>
</feature>
<feature type="compositionally biased region" description="Low complexity" evidence="2">
    <location>
        <begin position="1090"/>
        <end position="1104"/>
    </location>
</feature>
<feature type="compositionally biased region" description="Pro residues" evidence="2">
    <location>
        <begin position="1108"/>
        <end position="1119"/>
    </location>
</feature>
<feature type="compositionally biased region" description="Low complexity" evidence="2">
    <location>
        <begin position="1120"/>
        <end position="1142"/>
    </location>
</feature>
<feature type="compositionally biased region" description="Low complexity" evidence="2">
    <location>
        <begin position="1155"/>
        <end position="1172"/>
    </location>
</feature>
<feature type="compositionally biased region" description="Low complexity" evidence="2">
    <location>
        <begin position="1183"/>
        <end position="1252"/>
    </location>
</feature>
<feature type="compositionally biased region" description="Gly residues" evidence="2">
    <location>
        <begin position="1253"/>
        <end position="1265"/>
    </location>
</feature>
<gene>
    <name type="primary">rgr1</name>
    <name type="synonym">med14</name>
    <name type="ORF">NCU09112</name>
</gene>
<protein>
    <recommendedName>
        <fullName>Mediator of RNA polymerase II transcription subunit 14</fullName>
    </recommendedName>
    <alternativeName>
        <fullName>Mediator complex subunit 14</fullName>
    </alternativeName>
</protein>
<proteinExistence type="inferred from homology"/>
<dbReference type="EMBL" id="CM002236">
    <property type="protein sequence ID" value="EAA29085.3"/>
    <property type="molecule type" value="Genomic_DNA"/>
</dbReference>
<dbReference type="RefSeq" id="XP_958321.3">
    <property type="nucleotide sequence ID" value="XM_953228.3"/>
</dbReference>
<dbReference type="SMR" id="Q7S154"/>
<dbReference type="STRING" id="367110.Q7S154"/>
<dbReference type="PaxDb" id="5141-EFNCRP00000006455"/>
<dbReference type="EnsemblFungi" id="EAA29085">
    <property type="protein sequence ID" value="EAA29085"/>
    <property type="gene ID" value="NCU09112"/>
</dbReference>
<dbReference type="GeneID" id="3874469"/>
<dbReference type="KEGG" id="ncr:NCU09112"/>
<dbReference type="VEuPathDB" id="FungiDB:NCU09112"/>
<dbReference type="HOGENOM" id="CLU_003573_1_0_1"/>
<dbReference type="InParanoid" id="Q7S154"/>
<dbReference type="OrthoDB" id="205099at2759"/>
<dbReference type="Proteomes" id="UP000001805">
    <property type="component" value="Chromosome 1, Linkage Group I"/>
</dbReference>
<dbReference type="GO" id="GO:0070847">
    <property type="term" value="C:core mediator complex"/>
    <property type="evidence" value="ECO:0000318"/>
    <property type="project" value="GO_Central"/>
</dbReference>
<dbReference type="GO" id="GO:0016592">
    <property type="term" value="C:mediator complex"/>
    <property type="evidence" value="ECO:0000318"/>
    <property type="project" value="GO_Central"/>
</dbReference>
<dbReference type="GO" id="GO:0003712">
    <property type="term" value="F:transcription coregulator activity"/>
    <property type="evidence" value="ECO:0000318"/>
    <property type="project" value="GO_Central"/>
</dbReference>
<dbReference type="GO" id="GO:0006357">
    <property type="term" value="P:regulation of transcription by RNA polymerase II"/>
    <property type="evidence" value="ECO:0000318"/>
    <property type="project" value="GO_Central"/>
</dbReference>
<dbReference type="InterPro" id="IPR055122">
    <property type="entry name" value="Med14_N"/>
</dbReference>
<dbReference type="InterPro" id="IPR013947">
    <property type="entry name" value="Mediator_Med14"/>
</dbReference>
<dbReference type="PANTHER" id="PTHR12809">
    <property type="entry name" value="MEDIATOR COMPLEX SUBUNIT"/>
    <property type="match status" value="1"/>
</dbReference>
<dbReference type="PANTHER" id="PTHR12809:SF2">
    <property type="entry name" value="MEDIATOR OF RNA POLYMERASE II TRANSCRIPTION SUBUNIT 14"/>
    <property type="match status" value="1"/>
</dbReference>
<dbReference type="Pfam" id="PF08638">
    <property type="entry name" value="Med14"/>
    <property type="match status" value="1"/>
</dbReference>
<evidence type="ECO:0000250" key="1"/>
<evidence type="ECO:0000256" key="2">
    <source>
        <dbReference type="SAM" id="MobiDB-lite"/>
    </source>
</evidence>
<evidence type="ECO:0000305" key="3"/>
<accession>Q7S154</accession>
<sequence>MENGHMNGVRTHHDRNSWTNGVNGGVAKREGSPDKGKAHANMSGSSVMMNGGGASFMDVDSQPPGGTKFNDLPDEIQHITADIMPLSLLLTRLSQWTHTKLQDEIAYLASKPLPQGVLNGTTNHQSADNHDTSQESLEKKVHLLNFLQDMHSKWVKTLVITEWSRKAAQVGALIDIRVHLLTKQAHYQELFWELIRMKQDLHWAKVPGPDLKTALEVLTTGQASWMPELGYIEPPPITWEEKEAFIDNINTMLSVRLTFDEHEKLPAAFRDYNIANGRVTFKVKGEFEVDLTIGDEDFEQQFWFIDFRFLFTPAPAELSHGVRTFLENKVNTILGDQGLAGCYNYLHEFVLTQKIIEFRRQATELAMGRWVDTLKVEKLNRAMSIQYWLKPPHGLEGPSSQTAKSWILLGVWSGKGVEGDLDSKPSSYISLRWFRDNKEVKDFDIPLNVETISAEKLLTAVIASHVEYILRSISSKLLSKPRFAQKHARLDLEISKEEPQNSSLAVQLFDNDKAVIKIEPLTGFFTMFPRSPVFLKGQMKLNTSSNVAEEGANLMEQLRFDHAVKDLNSRVRSIGWFVCRPPITQEETKTIVYSDASGSREAFKAVWLRKANWMTRQWFVMISMSLGGDQWWLVDLSPPKPNFPAGRLRLFTKMPMTSNQLTLSDTFFRNLSVYAAGMISHITDLRKLHTLKKSHTALELPNHSLPPQVRLPTIYVRLSEMLQQRPGSSSRTLTWAKDFVPIIFKGVRSHTGDQEGPADATAVRRDTPASIRAEARLTVIDRNKFKSLRGNVDHDVVYNHRTGQFSLKLRADMGTPVVDLLADRVQALERLMEFVEAIRLAGSNAIPQSVALREVVFTYSNDPAEPVVGPPQGPRAWNVHLDLPKDAKVVLTLEKGNPHIRALDMLQDMAQSTKTELLPSYLPFSLPLYRVLDRIEDEWESIAAKNAGNVAIVVKAAEWVTVRFTLPAPTTRRLLCLDIKTMGRKGRLLWHVKRTDEKGHERPLNAPQDEFDTLLQRSVWHAHGDGRKTFGTSAAADPKVGIETLLWSISESVKSLVGTLPPPPGTSPHPGGGTQDLQQGPQKTPQEMVAAQAAQAAQAAQAAQGMPPQRPKQQPPTPSQPQQQHRNVNQPQAQAQPQLHTQVQLQQAQVAQLQAQRQAQARANNSSNNNNTFVNRAHPGQPPQQRQSGPQTQAQQQQQRYQIQQQAQAMQRMQQQQQQQAAQQHAQQQGQGPQGQRSVHGQAGPQGVPQGQPGHGGGANGGMGGKNAPVVVID</sequence>
<comment type="function">
    <text evidence="1">Component of the Mediator complex, a coactivator involved in the regulated transcription of nearly all RNA polymerase II-dependent genes. Mediator functions as a bridge to convey information from gene-specific regulatory proteins to the basal RNA polymerase II transcription machinery. Mediator is recruited to promoters by direct interactions with regulatory proteins and serves as a scaffold for the assembly of a functional preinitiation complex with RNA polymerase II and the general transcription factors (By similarity).</text>
</comment>
<comment type="subunit">
    <text evidence="1">Component of the Mediator complex.</text>
</comment>
<comment type="subcellular location">
    <subcellularLocation>
        <location evidence="3">Nucleus</location>
    </subcellularLocation>
</comment>
<comment type="similarity">
    <text evidence="3">Belongs to the Mediator complex subunit 14 family.</text>
</comment>
<keyword id="KW-0010">Activator</keyword>
<keyword id="KW-0539">Nucleus</keyword>
<keyword id="KW-1185">Reference proteome</keyword>
<keyword id="KW-0804">Transcription</keyword>
<keyword id="KW-0805">Transcription regulation</keyword>
<name>MED14_NEUCR</name>
<reference key="1">
    <citation type="journal article" date="2003" name="Nature">
        <title>The genome sequence of the filamentous fungus Neurospora crassa.</title>
        <authorList>
            <person name="Galagan J.E."/>
            <person name="Calvo S.E."/>
            <person name="Borkovich K.A."/>
            <person name="Selker E.U."/>
            <person name="Read N.D."/>
            <person name="Jaffe D.B."/>
            <person name="FitzHugh W."/>
            <person name="Ma L.-J."/>
            <person name="Smirnov S."/>
            <person name="Purcell S."/>
            <person name="Rehman B."/>
            <person name="Elkins T."/>
            <person name="Engels R."/>
            <person name="Wang S."/>
            <person name="Nielsen C.B."/>
            <person name="Butler J."/>
            <person name="Endrizzi M."/>
            <person name="Qui D."/>
            <person name="Ianakiev P."/>
            <person name="Bell-Pedersen D."/>
            <person name="Nelson M.A."/>
            <person name="Werner-Washburne M."/>
            <person name="Selitrennikoff C.P."/>
            <person name="Kinsey J.A."/>
            <person name="Braun E.L."/>
            <person name="Zelter A."/>
            <person name="Schulte U."/>
            <person name="Kothe G.O."/>
            <person name="Jedd G."/>
            <person name="Mewes H.-W."/>
            <person name="Staben C."/>
            <person name="Marcotte E."/>
            <person name="Greenberg D."/>
            <person name="Roy A."/>
            <person name="Foley K."/>
            <person name="Naylor J."/>
            <person name="Stange-Thomann N."/>
            <person name="Barrett R."/>
            <person name="Gnerre S."/>
            <person name="Kamal M."/>
            <person name="Kamvysselis M."/>
            <person name="Mauceli E.W."/>
            <person name="Bielke C."/>
            <person name="Rudd S."/>
            <person name="Frishman D."/>
            <person name="Krystofova S."/>
            <person name="Rasmussen C."/>
            <person name="Metzenberg R.L."/>
            <person name="Perkins D.D."/>
            <person name="Kroken S."/>
            <person name="Cogoni C."/>
            <person name="Macino G."/>
            <person name="Catcheside D.E.A."/>
            <person name="Li W."/>
            <person name="Pratt R.J."/>
            <person name="Osmani S.A."/>
            <person name="DeSouza C.P.C."/>
            <person name="Glass N.L."/>
            <person name="Orbach M.J."/>
            <person name="Berglund J.A."/>
            <person name="Voelker R."/>
            <person name="Yarden O."/>
            <person name="Plamann M."/>
            <person name="Seiler S."/>
            <person name="Dunlap J.C."/>
            <person name="Radford A."/>
            <person name="Aramayo R."/>
            <person name="Natvig D.O."/>
            <person name="Alex L.A."/>
            <person name="Mannhaupt G."/>
            <person name="Ebbole D.J."/>
            <person name="Freitag M."/>
            <person name="Paulsen I."/>
            <person name="Sachs M.S."/>
            <person name="Lander E.S."/>
            <person name="Nusbaum C."/>
            <person name="Birren B.W."/>
        </authorList>
    </citation>
    <scope>NUCLEOTIDE SEQUENCE [LARGE SCALE GENOMIC DNA]</scope>
    <source>
        <strain>ATCC 24698 / 74-OR23-1A / CBS 708.71 / DSM 1257 / FGSC 987</strain>
    </source>
</reference>
<organism>
    <name type="scientific">Neurospora crassa (strain ATCC 24698 / 74-OR23-1A / CBS 708.71 / DSM 1257 / FGSC 987)</name>
    <dbReference type="NCBI Taxonomy" id="367110"/>
    <lineage>
        <taxon>Eukaryota</taxon>
        <taxon>Fungi</taxon>
        <taxon>Dikarya</taxon>
        <taxon>Ascomycota</taxon>
        <taxon>Pezizomycotina</taxon>
        <taxon>Sordariomycetes</taxon>
        <taxon>Sordariomycetidae</taxon>
        <taxon>Sordariales</taxon>
        <taxon>Sordariaceae</taxon>
        <taxon>Neurospora</taxon>
    </lineage>
</organism>